<reference key="1">
    <citation type="journal article" date="2002" name="Nature">
        <title>Complete genome sequence of the model actinomycete Streptomyces coelicolor A3(2).</title>
        <authorList>
            <person name="Bentley S.D."/>
            <person name="Chater K.F."/>
            <person name="Cerdeno-Tarraga A.-M."/>
            <person name="Challis G.L."/>
            <person name="Thomson N.R."/>
            <person name="James K.D."/>
            <person name="Harris D.E."/>
            <person name="Quail M.A."/>
            <person name="Kieser H."/>
            <person name="Harper D."/>
            <person name="Bateman A."/>
            <person name="Brown S."/>
            <person name="Chandra G."/>
            <person name="Chen C.W."/>
            <person name="Collins M."/>
            <person name="Cronin A."/>
            <person name="Fraser A."/>
            <person name="Goble A."/>
            <person name="Hidalgo J."/>
            <person name="Hornsby T."/>
            <person name="Howarth S."/>
            <person name="Huang C.-H."/>
            <person name="Kieser T."/>
            <person name="Larke L."/>
            <person name="Murphy L.D."/>
            <person name="Oliver K."/>
            <person name="O'Neil S."/>
            <person name="Rabbinowitsch E."/>
            <person name="Rajandream M.A."/>
            <person name="Rutherford K.M."/>
            <person name="Rutter S."/>
            <person name="Seeger K."/>
            <person name="Saunders D."/>
            <person name="Sharp S."/>
            <person name="Squares R."/>
            <person name="Squares S."/>
            <person name="Taylor K."/>
            <person name="Warren T."/>
            <person name="Wietzorrek A."/>
            <person name="Woodward J.R."/>
            <person name="Barrell B.G."/>
            <person name="Parkhill J."/>
            <person name="Hopwood D.A."/>
        </authorList>
    </citation>
    <scope>NUCLEOTIDE SEQUENCE [LARGE SCALE GENOMIC DNA]</scope>
    <source>
        <strain>ATCC BAA-471 / A3(2) / M145</strain>
    </source>
</reference>
<evidence type="ECO:0000250" key="1"/>
<evidence type="ECO:0000255" key="2">
    <source>
        <dbReference type="PROSITE-ProRule" id="PRU10013"/>
    </source>
</evidence>
<evidence type="ECO:0000256" key="3">
    <source>
        <dbReference type="SAM" id="MobiDB-lite"/>
    </source>
</evidence>
<evidence type="ECO:0000305" key="4"/>
<gene>
    <name type="primary">katA</name>
    <name type="ordered locus">SCO6204</name>
    <name type="ORF">SC2G5.25c</name>
</gene>
<feature type="chain" id="PRO_0000085011" description="Catalase">
    <location>
        <begin position="1"/>
        <end position="487"/>
    </location>
</feature>
<feature type="region of interest" description="Disordered" evidence="3">
    <location>
        <begin position="1"/>
        <end position="20"/>
    </location>
</feature>
<feature type="active site" evidence="2">
    <location>
        <position position="54"/>
    </location>
</feature>
<feature type="active site" evidence="2">
    <location>
        <position position="127"/>
    </location>
</feature>
<feature type="binding site" description="axial binding residue" evidence="1">
    <location>
        <position position="337"/>
    </location>
    <ligand>
        <name>heme</name>
        <dbReference type="ChEBI" id="CHEBI:30413"/>
    </ligand>
    <ligandPart>
        <name>Fe</name>
        <dbReference type="ChEBI" id="CHEBI:18248"/>
    </ligandPart>
</feature>
<protein>
    <recommendedName>
        <fullName>Catalase</fullName>
        <ecNumber>1.11.1.6</ecNumber>
    </recommendedName>
</protein>
<accession>Q9Z598</accession>
<sequence length="487" mass="53911">MSQRVLTTESGAPVADNQNSASAGIGGPLLIQDQHLIEKLARFNRERIPERVVHARGSGAYGHFEVTDDVSGFTHADFLNTVGKRTEVFLRFSTVADSLGGADAVRDPRGFALKFYTEEGNYDLVGNNTPVFFIKDPIKFPDFIHSQKRDPFTGRQEPDNVFDFWAHSPEATHQITWLMGDRGIPASYRHMDGFGSHTYQWTNARGESFFVKYHFKTDQGIRCLTADEAAKLAGEDPTSHQTDLVQAIERGVYPSWTLHVQLMPVAEAANYRFNPFDVTKVWPHADYPLKRVGRLVLDRNPDNVFAEVEQAAFSPNNFVPGIGPSPDKMLQGRLFAYADAHRYRLGVNHTQLAVNAPKAVPGGAANYGRDGLMAANPQGRYAKNYEPNSYDGPAETGTPLAAPLAVSGHTGTHEAPLHTKDDHFVQAGALYRLMSEDEKQRLVANLAGGLSQVSRNDVVEKNLAHFHAADPEYGKRVEEAVRALRED</sequence>
<comment type="function">
    <text>Decomposes hydrogen peroxide into water and oxygen; serves to protect cells from the toxic effects of hydrogen peroxide.</text>
</comment>
<comment type="catalytic activity">
    <reaction evidence="2">
        <text>2 H2O2 = O2 + 2 H2O</text>
        <dbReference type="Rhea" id="RHEA:20309"/>
        <dbReference type="ChEBI" id="CHEBI:15377"/>
        <dbReference type="ChEBI" id="CHEBI:15379"/>
        <dbReference type="ChEBI" id="CHEBI:16240"/>
        <dbReference type="EC" id="1.11.1.6"/>
    </reaction>
</comment>
<comment type="cofactor">
    <cofactor>
        <name>heme</name>
        <dbReference type="ChEBI" id="CHEBI:30413"/>
    </cofactor>
</comment>
<comment type="similarity">
    <text evidence="4">Belongs to the catalase family.</text>
</comment>
<dbReference type="EC" id="1.11.1.6"/>
<dbReference type="EMBL" id="AL939126">
    <property type="protein sequence ID" value="CAB36612.1"/>
    <property type="molecule type" value="Genomic_DNA"/>
</dbReference>
<dbReference type="PIR" id="T34858">
    <property type="entry name" value="T34858"/>
</dbReference>
<dbReference type="RefSeq" id="NP_630307.1">
    <property type="nucleotide sequence ID" value="NC_003888.3"/>
</dbReference>
<dbReference type="RefSeq" id="WP_003972723.1">
    <property type="nucleotide sequence ID" value="NZ_VNID01000009.1"/>
</dbReference>
<dbReference type="SMR" id="Q9Z598"/>
<dbReference type="STRING" id="100226.gene:17763863"/>
<dbReference type="PaxDb" id="100226-SCO6204"/>
<dbReference type="KEGG" id="sco:SCO6204"/>
<dbReference type="PATRIC" id="fig|100226.15.peg.6317"/>
<dbReference type="eggNOG" id="COG0753">
    <property type="taxonomic scope" value="Bacteria"/>
</dbReference>
<dbReference type="HOGENOM" id="CLU_010645_2_0_11"/>
<dbReference type="InParanoid" id="Q9Z598"/>
<dbReference type="OrthoDB" id="3169619at2"/>
<dbReference type="PhylomeDB" id="Q9Z598"/>
<dbReference type="Proteomes" id="UP000001973">
    <property type="component" value="Chromosome"/>
</dbReference>
<dbReference type="GO" id="GO:0005737">
    <property type="term" value="C:cytoplasm"/>
    <property type="evidence" value="ECO:0000318"/>
    <property type="project" value="GO_Central"/>
</dbReference>
<dbReference type="GO" id="GO:0004096">
    <property type="term" value="F:catalase activity"/>
    <property type="evidence" value="ECO:0000318"/>
    <property type="project" value="GO_Central"/>
</dbReference>
<dbReference type="GO" id="GO:0020037">
    <property type="term" value="F:heme binding"/>
    <property type="evidence" value="ECO:0000318"/>
    <property type="project" value="GO_Central"/>
</dbReference>
<dbReference type="GO" id="GO:0046872">
    <property type="term" value="F:metal ion binding"/>
    <property type="evidence" value="ECO:0007669"/>
    <property type="project" value="UniProtKB-KW"/>
</dbReference>
<dbReference type="GO" id="GO:0042744">
    <property type="term" value="P:hydrogen peroxide catabolic process"/>
    <property type="evidence" value="ECO:0000318"/>
    <property type="project" value="GO_Central"/>
</dbReference>
<dbReference type="GO" id="GO:0042542">
    <property type="term" value="P:response to hydrogen peroxide"/>
    <property type="evidence" value="ECO:0000318"/>
    <property type="project" value="GO_Central"/>
</dbReference>
<dbReference type="CDD" id="cd08156">
    <property type="entry name" value="catalase_clade_3"/>
    <property type="match status" value="1"/>
</dbReference>
<dbReference type="FunFam" id="2.40.180.10:FF:000001">
    <property type="entry name" value="Catalase"/>
    <property type="match status" value="1"/>
</dbReference>
<dbReference type="Gene3D" id="2.40.180.10">
    <property type="entry name" value="Catalase core domain"/>
    <property type="match status" value="1"/>
</dbReference>
<dbReference type="InterPro" id="IPR018028">
    <property type="entry name" value="Catalase"/>
</dbReference>
<dbReference type="InterPro" id="IPR040333">
    <property type="entry name" value="Catalase_3"/>
</dbReference>
<dbReference type="InterPro" id="IPR024708">
    <property type="entry name" value="Catalase_AS"/>
</dbReference>
<dbReference type="InterPro" id="IPR024711">
    <property type="entry name" value="Catalase_clade1/3"/>
</dbReference>
<dbReference type="InterPro" id="IPR011614">
    <property type="entry name" value="Catalase_core"/>
</dbReference>
<dbReference type="InterPro" id="IPR002226">
    <property type="entry name" value="Catalase_haem_BS"/>
</dbReference>
<dbReference type="InterPro" id="IPR010582">
    <property type="entry name" value="Catalase_immune_responsive"/>
</dbReference>
<dbReference type="InterPro" id="IPR020835">
    <property type="entry name" value="Catalase_sf"/>
</dbReference>
<dbReference type="PANTHER" id="PTHR11465">
    <property type="entry name" value="CATALASE"/>
    <property type="match status" value="1"/>
</dbReference>
<dbReference type="PANTHER" id="PTHR11465:SF9">
    <property type="entry name" value="CATALASE"/>
    <property type="match status" value="1"/>
</dbReference>
<dbReference type="Pfam" id="PF00199">
    <property type="entry name" value="Catalase"/>
    <property type="match status" value="1"/>
</dbReference>
<dbReference type="Pfam" id="PF06628">
    <property type="entry name" value="Catalase-rel"/>
    <property type="match status" value="1"/>
</dbReference>
<dbReference type="PIRSF" id="PIRSF038928">
    <property type="entry name" value="Catalase_clade1-3"/>
    <property type="match status" value="1"/>
</dbReference>
<dbReference type="PRINTS" id="PR00067">
    <property type="entry name" value="CATALASE"/>
</dbReference>
<dbReference type="SMART" id="SM01060">
    <property type="entry name" value="Catalase"/>
    <property type="match status" value="1"/>
</dbReference>
<dbReference type="SUPFAM" id="SSF56634">
    <property type="entry name" value="Heme-dependent catalase-like"/>
    <property type="match status" value="1"/>
</dbReference>
<dbReference type="PROSITE" id="PS00437">
    <property type="entry name" value="CATALASE_1"/>
    <property type="match status" value="1"/>
</dbReference>
<dbReference type="PROSITE" id="PS00438">
    <property type="entry name" value="CATALASE_2"/>
    <property type="match status" value="1"/>
</dbReference>
<dbReference type="PROSITE" id="PS51402">
    <property type="entry name" value="CATALASE_3"/>
    <property type="match status" value="1"/>
</dbReference>
<proteinExistence type="inferred from homology"/>
<organism>
    <name type="scientific">Streptomyces coelicolor (strain ATCC BAA-471 / A3(2) / M145)</name>
    <dbReference type="NCBI Taxonomy" id="100226"/>
    <lineage>
        <taxon>Bacteria</taxon>
        <taxon>Bacillati</taxon>
        <taxon>Actinomycetota</taxon>
        <taxon>Actinomycetes</taxon>
        <taxon>Kitasatosporales</taxon>
        <taxon>Streptomycetaceae</taxon>
        <taxon>Streptomyces</taxon>
        <taxon>Streptomyces albidoflavus group</taxon>
    </lineage>
</organism>
<name>CATA_STRCO</name>
<keyword id="KW-0349">Heme</keyword>
<keyword id="KW-0376">Hydrogen peroxide</keyword>
<keyword id="KW-0408">Iron</keyword>
<keyword id="KW-0479">Metal-binding</keyword>
<keyword id="KW-0560">Oxidoreductase</keyword>
<keyword id="KW-0575">Peroxidase</keyword>
<keyword id="KW-1185">Reference proteome</keyword>